<evidence type="ECO:0000255" key="1">
    <source>
        <dbReference type="HAMAP-Rule" id="MF_00409"/>
    </source>
</evidence>
<protein>
    <recommendedName>
        <fullName evidence="1">Tetraacyldisaccharide 4'-kinase</fullName>
        <ecNumber evidence="1">2.7.1.130</ecNumber>
    </recommendedName>
    <alternativeName>
        <fullName evidence="1">Lipid A 4'-kinase</fullName>
    </alternativeName>
</protein>
<dbReference type="EC" id="2.7.1.130" evidence="1"/>
<dbReference type="EMBL" id="CP001055">
    <property type="protein sequence ID" value="ACC98175.1"/>
    <property type="molecule type" value="Genomic_DNA"/>
</dbReference>
<dbReference type="RefSeq" id="WP_012414790.1">
    <property type="nucleotide sequence ID" value="NC_010644.1"/>
</dbReference>
<dbReference type="SMR" id="B2KC48"/>
<dbReference type="STRING" id="445932.Emin_0620"/>
<dbReference type="KEGG" id="emi:Emin_0620"/>
<dbReference type="HOGENOM" id="CLU_038816_6_0_0"/>
<dbReference type="OrthoDB" id="9766423at2"/>
<dbReference type="UniPathway" id="UPA00359">
    <property type="reaction ID" value="UER00482"/>
</dbReference>
<dbReference type="Proteomes" id="UP000001029">
    <property type="component" value="Chromosome"/>
</dbReference>
<dbReference type="GO" id="GO:0005886">
    <property type="term" value="C:plasma membrane"/>
    <property type="evidence" value="ECO:0007669"/>
    <property type="project" value="TreeGrafter"/>
</dbReference>
<dbReference type="GO" id="GO:0005524">
    <property type="term" value="F:ATP binding"/>
    <property type="evidence" value="ECO:0007669"/>
    <property type="project" value="UniProtKB-UniRule"/>
</dbReference>
<dbReference type="GO" id="GO:0009029">
    <property type="term" value="F:tetraacyldisaccharide 4'-kinase activity"/>
    <property type="evidence" value="ECO:0007669"/>
    <property type="project" value="UniProtKB-UniRule"/>
</dbReference>
<dbReference type="GO" id="GO:0009245">
    <property type="term" value="P:lipid A biosynthetic process"/>
    <property type="evidence" value="ECO:0007669"/>
    <property type="project" value="UniProtKB-UniRule"/>
</dbReference>
<dbReference type="GO" id="GO:0009244">
    <property type="term" value="P:lipopolysaccharide core region biosynthetic process"/>
    <property type="evidence" value="ECO:0007669"/>
    <property type="project" value="TreeGrafter"/>
</dbReference>
<dbReference type="HAMAP" id="MF_00409">
    <property type="entry name" value="LpxK"/>
    <property type="match status" value="1"/>
</dbReference>
<dbReference type="InterPro" id="IPR003758">
    <property type="entry name" value="LpxK"/>
</dbReference>
<dbReference type="InterPro" id="IPR027417">
    <property type="entry name" value="P-loop_NTPase"/>
</dbReference>
<dbReference type="NCBIfam" id="TIGR00682">
    <property type="entry name" value="lpxK"/>
    <property type="match status" value="1"/>
</dbReference>
<dbReference type="PANTHER" id="PTHR42724">
    <property type="entry name" value="TETRAACYLDISACCHARIDE 4'-KINASE"/>
    <property type="match status" value="1"/>
</dbReference>
<dbReference type="PANTHER" id="PTHR42724:SF1">
    <property type="entry name" value="TETRAACYLDISACCHARIDE 4'-KINASE, MITOCHONDRIAL-RELATED"/>
    <property type="match status" value="1"/>
</dbReference>
<dbReference type="Pfam" id="PF02606">
    <property type="entry name" value="LpxK"/>
    <property type="match status" value="1"/>
</dbReference>
<dbReference type="SUPFAM" id="SSF52540">
    <property type="entry name" value="P-loop containing nucleoside triphosphate hydrolases"/>
    <property type="match status" value="1"/>
</dbReference>
<keyword id="KW-0067">ATP-binding</keyword>
<keyword id="KW-0418">Kinase</keyword>
<keyword id="KW-0441">Lipid A biosynthesis</keyword>
<keyword id="KW-0444">Lipid biosynthesis</keyword>
<keyword id="KW-0443">Lipid metabolism</keyword>
<keyword id="KW-0547">Nucleotide-binding</keyword>
<keyword id="KW-1185">Reference proteome</keyword>
<keyword id="KW-0808">Transferase</keyword>
<organism>
    <name type="scientific">Elusimicrobium minutum (strain Pei191)</name>
    <dbReference type="NCBI Taxonomy" id="445932"/>
    <lineage>
        <taxon>Bacteria</taxon>
        <taxon>Pseudomonadati</taxon>
        <taxon>Elusimicrobiota</taxon>
        <taxon>Elusimicrobia</taxon>
        <taxon>Elusimicrobiales</taxon>
        <taxon>Elusimicrobiaceae</taxon>
        <taxon>Elusimicrobium</taxon>
    </lineage>
</organism>
<proteinExistence type="inferred from homology"/>
<name>LPXK_ELUMP</name>
<sequence length="374" mass="42606">MDLEKTRDNLKNNVFGRFFLYVLSKGYELGTIVNKFLYENGWRKSYSVNTRVVCVGNITAGGTGKTTAVLLAARTLAEAGIRTAIISRGYKRDKKNKNPVVLFDDELENNWVTAGDEPFMMSRALADVKVPIVIHEDRHLAATEALKRFKSQVLLLDDGFQHFRLKRDANIVLIDARNPFGGGQLLPYGTLREGLSGLKRANLVLLTHSNQADQRKKEDIKDQIRLQNEDIEILEAVHQPEHYFDICNSVKVPLNHLKGEAGVFSAIGEPGGFEDTLKDLGLKLVKVWRYPDHRRYTEEDLKTFVDLAGENPLVTTFKDFVKFPENWRDILKKNVYVLSVSMKIKGKKEFDIFAEALYPKFTNLNVKKESKSRK</sequence>
<comment type="function">
    <text evidence="1">Transfers the gamma-phosphate of ATP to the 4'-position of a tetraacyldisaccharide 1-phosphate intermediate (termed DS-1-P) to form tetraacyldisaccharide 1,4'-bis-phosphate (lipid IVA).</text>
</comment>
<comment type="catalytic activity">
    <reaction evidence="1">
        <text>a lipid A disaccharide + ATP = a lipid IVA + ADP + H(+)</text>
        <dbReference type="Rhea" id="RHEA:67840"/>
        <dbReference type="ChEBI" id="CHEBI:15378"/>
        <dbReference type="ChEBI" id="CHEBI:30616"/>
        <dbReference type="ChEBI" id="CHEBI:176343"/>
        <dbReference type="ChEBI" id="CHEBI:176425"/>
        <dbReference type="ChEBI" id="CHEBI:456216"/>
        <dbReference type="EC" id="2.7.1.130"/>
    </reaction>
</comment>
<comment type="pathway">
    <text evidence="1">Glycolipid biosynthesis; lipid IV(A) biosynthesis; lipid IV(A) from (3R)-3-hydroxytetradecanoyl-[acyl-carrier-protein] and UDP-N-acetyl-alpha-D-glucosamine: step 6/6.</text>
</comment>
<comment type="similarity">
    <text evidence="1">Belongs to the LpxK family.</text>
</comment>
<accession>B2KC48</accession>
<feature type="chain" id="PRO_1000134741" description="Tetraacyldisaccharide 4'-kinase">
    <location>
        <begin position="1"/>
        <end position="374"/>
    </location>
</feature>
<feature type="binding site" evidence="1">
    <location>
        <begin position="59"/>
        <end position="66"/>
    </location>
    <ligand>
        <name>ATP</name>
        <dbReference type="ChEBI" id="CHEBI:30616"/>
    </ligand>
</feature>
<gene>
    <name evidence="1" type="primary">lpxK</name>
    <name type="ordered locus">Emin_0620</name>
</gene>
<reference key="1">
    <citation type="journal article" date="2009" name="Appl. Environ. Microbiol.">
        <title>Genomic analysis of 'Elusimicrobium minutum,' the first cultivated representative of the phylum 'Elusimicrobia' (formerly termite group 1).</title>
        <authorList>
            <person name="Herlemann D.P.R."/>
            <person name="Geissinger O."/>
            <person name="Ikeda-Ohtsubo W."/>
            <person name="Kunin V."/>
            <person name="Sun H."/>
            <person name="Lapidus A."/>
            <person name="Hugenholtz P."/>
            <person name="Brune A."/>
        </authorList>
    </citation>
    <scope>NUCLEOTIDE SEQUENCE [LARGE SCALE GENOMIC DNA]</scope>
    <source>
        <strain>Pei191</strain>
    </source>
</reference>